<keyword id="KW-0120">Carbon dioxide fixation</keyword>
<keyword id="KW-0456">Lyase</keyword>
<keyword id="KW-0460">Magnesium</keyword>
<name>CAPPA_SACI1</name>
<accession>C3NJA0</accession>
<proteinExistence type="inferred from homology"/>
<feature type="chain" id="PRO_1000216175" description="Phosphoenolpyruvate carboxylase">
    <location>
        <begin position="1"/>
        <end position="511"/>
    </location>
</feature>
<gene>
    <name evidence="1" type="primary">ppcA</name>
    <name type="ordered locus">YN1551_0069</name>
</gene>
<dbReference type="EC" id="4.1.1.31" evidence="1"/>
<dbReference type="EMBL" id="CP001404">
    <property type="protein sequence ID" value="ACP47267.1"/>
    <property type="molecule type" value="Genomic_DNA"/>
</dbReference>
<dbReference type="RefSeq" id="WP_012716932.1">
    <property type="nucleotide sequence ID" value="NC_012623.1"/>
</dbReference>
<dbReference type="SMR" id="C3NJA0"/>
<dbReference type="GeneID" id="7811442"/>
<dbReference type="KEGG" id="sin:YN1551_0069"/>
<dbReference type="HOGENOM" id="CLU_517433_0_0_2"/>
<dbReference type="Proteomes" id="UP000006818">
    <property type="component" value="Chromosome"/>
</dbReference>
<dbReference type="GO" id="GO:0000287">
    <property type="term" value="F:magnesium ion binding"/>
    <property type="evidence" value="ECO:0007669"/>
    <property type="project" value="UniProtKB-UniRule"/>
</dbReference>
<dbReference type="GO" id="GO:0008964">
    <property type="term" value="F:phosphoenolpyruvate carboxylase activity"/>
    <property type="evidence" value="ECO:0007669"/>
    <property type="project" value="UniProtKB-UniRule"/>
</dbReference>
<dbReference type="GO" id="GO:0015977">
    <property type="term" value="P:carbon fixation"/>
    <property type="evidence" value="ECO:0007669"/>
    <property type="project" value="UniProtKB-UniRule"/>
</dbReference>
<dbReference type="GO" id="GO:0006107">
    <property type="term" value="P:oxaloacetate metabolic process"/>
    <property type="evidence" value="ECO:0007669"/>
    <property type="project" value="UniProtKB-UniRule"/>
</dbReference>
<dbReference type="GO" id="GO:0006099">
    <property type="term" value="P:tricarboxylic acid cycle"/>
    <property type="evidence" value="ECO:0007669"/>
    <property type="project" value="InterPro"/>
</dbReference>
<dbReference type="HAMAP" id="MF_01904">
    <property type="entry name" value="PEPcase_type2"/>
    <property type="match status" value="1"/>
</dbReference>
<dbReference type="InterPro" id="IPR007566">
    <property type="entry name" value="PEP_COase_arc-type"/>
</dbReference>
<dbReference type="InterPro" id="IPR015813">
    <property type="entry name" value="Pyrv/PenolPyrv_kinase-like_dom"/>
</dbReference>
<dbReference type="NCBIfam" id="TIGR02751">
    <property type="entry name" value="PEPCase_arch"/>
    <property type="match status" value="1"/>
</dbReference>
<dbReference type="Pfam" id="PF14010">
    <property type="entry name" value="PEPcase_2"/>
    <property type="match status" value="1"/>
</dbReference>
<dbReference type="PIRSF" id="PIRSF006677">
    <property type="entry name" value="UCP006677"/>
    <property type="match status" value="1"/>
</dbReference>
<dbReference type="SUPFAM" id="SSF51621">
    <property type="entry name" value="Phosphoenolpyruvate/pyruvate domain"/>
    <property type="match status" value="1"/>
</dbReference>
<evidence type="ECO:0000255" key="1">
    <source>
        <dbReference type="HAMAP-Rule" id="MF_01904"/>
    </source>
</evidence>
<organism>
    <name type="scientific">Saccharolobus islandicus (strain Y.N.15.51 / Yellowstone #2)</name>
    <name type="common">Sulfolobus islandicus</name>
    <dbReference type="NCBI Taxonomy" id="419942"/>
    <lineage>
        <taxon>Archaea</taxon>
        <taxon>Thermoproteota</taxon>
        <taxon>Thermoprotei</taxon>
        <taxon>Sulfolobales</taxon>
        <taxon>Sulfolobaceae</taxon>
        <taxon>Saccharolobus</taxon>
    </lineage>
</organism>
<comment type="function">
    <text evidence="1">Catalyzes the irreversible beta-carboxylation of phosphoenolpyruvate (PEP) to form oxaloacetate (OAA), a four-carbon dicarboxylic acid source for the tricarboxylic acid cycle.</text>
</comment>
<comment type="catalytic activity">
    <reaction evidence="1">
        <text>oxaloacetate + phosphate = phosphoenolpyruvate + hydrogencarbonate</text>
        <dbReference type="Rhea" id="RHEA:28370"/>
        <dbReference type="ChEBI" id="CHEBI:16452"/>
        <dbReference type="ChEBI" id="CHEBI:17544"/>
        <dbReference type="ChEBI" id="CHEBI:43474"/>
        <dbReference type="ChEBI" id="CHEBI:58702"/>
        <dbReference type="EC" id="4.1.1.31"/>
    </reaction>
</comment>
<comment type="cofactor">
    <cofactor evidence="1">
        <name>Mg(2+)</name>
        <dbReference type="ChEBI" id="CHEBI:18420"/>
    </cofactor>
</comment>
<comment type="subunit">
    <text evidence="1">Homotetramer.</text>
</comment>
<comment type="similarity">
    <text evidence="1">Belongs to the PEPCase type 2 family.</text>
</comment>
<sequence length="511" mass="58776">MRIIPRTMSTQHPDNAKVPEWAKSEVIEGEDEVKEAFLAYSMYGVHEVMWDAEGKDVDTHVVRKLLSNYPDYFREHILGKDVFLTYRLPNPKVEGADRKVFAETMESIPITYDLAEKFYGNGITVPVFEVILPMTTSNLEIISVARYYEKAVANEDELELYDGVKVKDLVGEIYPKVIEVIPLVEDRDSLQNIDNIVEGYYKVIKPKYMRVFLARSDPAMNYGMITAVLSVKIALSELYKLSESLNFEIYPIIGVGSLPFRGHLSPENYEKVLEEYKGVYTYTIQSAFKYDYDYDKVKSAISSINNSRIGPAKILEKYEEDVLRKITILYTERYQPIIENLANAINDVSVLLPRRRARKLHIGLFGYSRSAGKVSLPRAISFVGSLYSIGIPPELIGISSLSNLDEKEWDIFKQNYVNFKHDLQTAARFFNWESFELIKDIWKISEDTIAKIKEDIDYAESVIGIKLGGIDYDSRKHILMSSLFLLSFKEKILQESKKYLYEMALIRRSLG</sequence>
<protein>
    <recommendedName>
        <fullName evidence="1">Phosphoenolpyruvate carboxylase</fullName>
        <shortName evidence="1">PEPC</shortName>
        <shortName evidence="1">PEPCase</shortName>
        <ecNumber evidence="1">4.1.1.31</ecNumber>
    </recommendedName>
</protein>
<reference key="1">
    <citation type="journal article" date="2009" name="Proc. Natl. Acad. Sci. U.S.A.">
        <title>Biogeography of the Sulfolobus islandicus pan-genome.</title>
        <authorList>
            <person name="Reno M.L."/>
            <person name="Held N.L."/>
            <person name="Fields C.J."/>
            <person name="Burke P.V."/>
            <person name="Whitaker R.J."/>
        </authorList>
    </citation>
    <scope>NUCLEOTIDE SEQUENCE [LARGE SCALE GENOMIC DNA]</scope>
    <source>
        <strain>Y.N.15.51 / Yellowstone #2</strain>
    </source>
</reference>